<evidence type="ECO:0000255" key="1">
    <source>
        <dbReference type="HAMAP-Rule" id="MF_01026"/>
    </source>
</evidence>
<feature type="chain" id="PRO_1000063546" description="3-isopropylmalate dehydratase large subunit">
    <location>
        <begin position="1"/>
        <end position="466"/>
    </location>
</feature>
<feature type="binding site" evidence="1">
    <location>
        <position position="347"/>
    </location>
    <ligand>
        <name>[4Fe-4S] cluster</name>
        <dbReference type="ChEBI" id="CHEBI:49883"/>
    </ligand>
</feature>
<feature type="binding site" evidence="1">
    <location>
        <position position="407"/>
    </location>
    <ligand>
        <name>[4Fe-4S] cluster</name>
        <dbReference type="ChEBI" id="CHEBI:49883"/>
    </ligand>
</feature>
<feature type="binding site" evidence="1">
    <location>
        <position position="410"/>
    </location>
    <ligand>
        <name>[4Fe-4S] cluster</name>
        <dbReference type="ChEBI" id="CHEBI:49883"/>
    </ligand>
</feature>
<comment type="function">
    <text evidence="1">Catalyzes the isomerization between 2-isopropylmalate and 3-isopropylmalate, via the formation of 2-isopropylmaleate.</text>
</comment>
<comment type="catalytic activity">
    <reaction evidence="1">
        <text>(2R,3S)-3-isopropylmalate = (2S)-2-isopropylmalate</text>
        <dbReference type="Rhea" id="RHEA:32287"/>
        <dbReference type="ChEBI" id="CHEBI:1178"/>
        <dbReference type="ChEBI" id="CHEBI:35121"/>
        <dbReference type="EC" id="4.2.1.33"/>
    </reaction>
</comment>
<comment type="cofactor">
    <cofactor evidence="1">
        <name>[4Fe-4S] cluster</name>
        <dbReference type="ChEBI" id="CHEBI:49883"/>
    </cofactor>
    <text evidence="1">Binds 1 [4Fe-4S] cluster per subunit.</text>
</comment>
<comment type="pathway">
    <text evidence="1">Amino-acid biosynthesis; L-leucine biosynthesis; L-leucine from 3-methyl-2-oxobutanoate: step 2/4.</text>
</comment>
<comment type="subunit">
    <text evidence="1">Heterodimer of LeuC and LeuD.</text>
</comment>
<comment type="similarity">
    <text evidence="1">Belongs to the aconitase/IPM isomerase family. LeuC type 1 subfamily.</text>
</comment>
<dbReference type="EC" id="4.2.1.33" evidence="1"/>
<dbReference type="EMBL" id="CP000822">
    <property type="protein sequence ID" value="ABV14390.1"/>
    <property type="molecule type" value="Genomic_DNA"/>
</dbReference>
<dbReference type="RefSeq" id="WP_012134093.1">
    <property type="nucleotide sequence ID" value="NC_009792.1"/>
</dbReference>
<dbReference type="SMR" id="A8ALM7"/>
<dbReference type="STRING" id="290338.CKO_03306"/>
<dbReference type="GeneID" id="45137074"/>
<dbReference type="KEGG" id="cko:CKO_03306"/>
<dbReference type="HOGENOM" id="CLU_006714_3_4_6"/>
<dbReference type="OrthoDB" id="9802769at2"/>
<dbReference type="UniPathway" id="UPA00048">
    <property type="reaction ID" value="UER00071"/>
</dbReference>
<dbReference type="Proteomes" id="UP000008148">
    <property type="component" value="Chromosome"/>
</dbReference>
<dbReference type="GO" id="GO:0003861">
    <property type="term" value="F:3-isopropylmalate dehydratase activity"/>
    <property type="evidence" value="ECO:0007669"/>
    <property type="project" value="UniProtKB-UniRule"/>
</dbReference>
<dbReference type="GO" id="GO:0051539">
    <property type="term" value="F:4 iron, 4 sulfur cluster binding"/>
    <property type="evidence" value="ECO:0007669"/>
    <property type="project" value="UniProtKB-KW"/>
</dbReference>
<dbReference type="GO" id="GO:0046872">
    <property type="term" value="F:metal ion binding"/>
    <property type="evidence" value="ECO:0007669"/>
    <property type="project" value="UniProtKB-KW"/>
</dbReference>
<dbReference type="GO" id="GO:0009098">
    <property type="term" value="P:L-leucine biosynthetic process"/>
    <property type="evidence" value="ECO:0007669"/>
    <property type="project" value="UniProtKB-UniRule"/>
</dbReference>
<dbReference type="CDD" id="cd01583">
    <property type="entry name" value="IPMI"/>
    <property type="match status" value="1"/>
</dbReference>
<dbReference type="FunFam" id="3.30.499.10:FF:000006">
    <property type="entry name" value="3-isopropylmalate dehydratase large subunit"/>
    <property type="match status" value="1"/>
</dbReference>
<dbReference type="FunFam" id="3.30.499.10:FF:000007">
    <property type="entry name" value="3-isopropylmalate dehydratase large subunit"/>
    <property type="match status" value="1"/>
</dbReference>
<dbReference type="Gene3D" id="3.30.499.10">
    <property type="entry name" value="Aconitase, domain 3"/>
    <property type="match status" value="2"/>
</dbReference>
<dbReference type="HAMAP" id="MF_01026">
    <property type="entry name" value="LeuC_type1"/>
    <property type="match status" value="1"/>
</dbReference>
<dbReference type="InterPro" id="IPR004430">
    <property type="entry name" value="3-IsopropMal_deHydase_lsu"/>
</dbReference>
<dbReference type="InterPro" id="IPR015931">
    <property type="entry name" value="Acnase/IPM_dHydase_lsu_aba_1/3"/>
</dbReference>
<dbReference type="InterPro" id="IPR001030">
    <property type="entry name" value="Acoase/IPM_deHydtase_lsu_aba"/>
</dbReference>
<dbReference type="InterPro" id="IPR018136">
    <property type="entry name" value="Aconitase_4Fe-4S_BS"/>
</dbReference>
<dbReference type="InterPro" id="IPR036008">
    <property type="entry name" value="Aconitase_4Fe-4S_dom"/>
</dbReference>
<dbReference type="InterPro" id="IPR050067">
    <property type="entry name" value="IPM_dehydratase_rel_enz"/>
</dbReference>
<dbReference type="InterPro" id="IPR033941">
    <property type="entry name" value="IPMI_cat"/>
</dbReference>
<dbReference type="NCBIfam" id="TIGR00170">
    <property type="entry name" value="leuC"/>
    <property type="match status" value="1"/>
</dbReference>
<dbReference type="NCBIfam" id="NF004016">
    <property type="entry name" value="PRK05478.1"/>
    <property type="match status" value="1"/>
</dbReference>
<dbReference type="NCBIfam" id="NF009116">
    <property type="entry name" value="PRK12466.1"/>
    <property type="match status" value="1"/>
</dbReference>
<dbReference type="PANTHER" id="PTHR43822:SF9">
    <property type="entry name" value="3-ISOPROPYLMALATE DEHYDRATASE"/>
    <property type="match status" value="1"/>
</dbReference>
<dbReference type="PANTHER" id="PTHR43822">
    <property type="entry name" value="HOMOACONITASE, MITOCHONDRIAL-RELATED"/>
    <property type="match status" value="1"/>
</dbReference>
<dbReference type="Pfam" id="PF00330">
    <property type="entry name" value="Aconitase"/>
    <property type="match status" value="1"/>
</dbReference>
<dbReference type="PRINTS" id="PR00415">
    <property type="entry name" value="ACONITASE"/>
</dbReference>
<dbReference type="SUPFAM" id="SSF53732">
    <property type="entry name" value="Aconitase iron-sulfur domain"/>
    <property type="match status" value="1"/>
</dbReference>
<dbReference type="PROSITE" id="PS00450">
    <property type="entry name" value="ACONITASE_1"/>
    <property type="match status" value="1"/>
</dbReference>
<dbReference type="PROSITE" id="PS01244">
    <property type="entry name" value="ACONITASE_2"/>
    <property type="match status" value="1"/>
</dbReference>
<organism>
    <name type="scientific">Citrobacter koseri (strain ATCC BAA-895 / CDC 4225-83 / SGSC4696)</name>
    <dbReference type="NCBI Taxonomy" id="290338"/>
    <lineage>
        <taxon>Bacteria</taxon>
        <taxon>Pseudomonadati</taxon>
        <taxon>Pseudomonadota</taxon>
        <taxon>Gammaproteobacteria</taxon>
        <taxon>Enterobacterales</taxon>
        <taxon>Enterobacteriaceae</taxon>
        <taxon>Citrobacter</taxon>
    </lineage>
</organism>
<sequence length="466" mass="49639">MAKTLYEKLFDAHVVYEAQNETPLLYIDRHLVHEVTSPQAFDGLRAHGRPVRQPGKTFATMDHNVSTQTKDINASGEMARIQMQELIKNCKAFGVELYDLNHPYQGIVHVMGPEQGVTLPGMTIVCGDSHTATHGAFGALAFGIGTSEVEHVLATQTLKQGRAKTMKIEVKGTAAPGITAKDIVLAIIGKTGSAGGTGHVVEFCGEAIRNLSMEGRMTLCNMAIEMGAKAGLVAPDDTTFNYVKGRLHAPKGSDFDDAVAYWKTLKTDDGATFDTVVTLQAEDIAPQVTWGTNPGQVISVNDNIPDPASFADPVERASAEKALAYMGLKPGIPLTDVAIDKVFIGSCTNSRIEDLRAAAEIAKGRKVAPGVQALVVPGSGPVKAQAEAEGLDKIFIEAGFEWRLPGCSMCLAMNNDRLNPGERCASTSNRNFEGRQGRGGRTHLVSPAMAAAAAVTGHFADIRSIK</sequence>
<keyword id="KW-0004">4Fe-4S</keyword>
<keyword id="KW-0028">Amino-acid biosynthesis</keyword>
<keyword id="KW-0100">Branched-chain amino acid biosynthesis</keyword>
<keyword id="KW-0408">Iron</keyword>
<keyword id="KW-0411">Iron-sulfur</keyword>
<keyword id="KW-0432">Leucine biosynthesis</keyword>
<keyword id="KW-0456">Lyase</keyword>
<keyword id="KW-0479">Metal-binding</keyword>
<keyword id="KW-1185">Reference proteome</keyword>
<protein>
    <recommendedName>
        <fullName evidence="1">3-isopropylmalate dehydratase large subunit</fullName>
        <ecNumber evidence="1">4.2.1.33</ecNumber>
    </recommendedName>
    <alternativeName>
        <fullName evidence="1">Alpha-IPM isomerase</fullName>
        <shortName evidence="1">IPMI</shortName>
    </alternativeName>
    <alternativeName>
        <fullName evidence="1">Isopropylmalate isomerase</fullName>
    </alternativeName>
</protein>
<name>LEUC_CITK8</name>
<reference key="1">
    <citation type="submission" date="2007-08" db="EMBL/GenBank/DDBJ databases">
        <authorList>
            <consortium name="The Citrobacter koseri Genome Sequencing Project"/>
            <person name="McClelland M."/>
            <person name="Sanderson E.K."/>
            <person name="Porwollik S."/>
            <person name="Spieth J."/>
            <person name="Clifton W.S."/>
            <person name="Latreille P."/>
            <person name="Courtney L."/>
            <person name="Wang C."/>
            <person name="Pepin K."/>
            <person name="Bhonagiri V."/>
            <person name="Nash W."/>
            <person name="Johnson M."/>
            <person name="Thiruvilangam P."/>
            <person name="Wilson R."/>
        </authorList>
    </citation>
    <scope>NUCLEOTIDE SEQUENCE [LARGE SCALE GENOMIC DNA]</scope>
    <source>
        <strain>ATCC BAA-895 / CDC 4225-83 / SGSC4696</strain>
    </source>
</reference>
<accession>A8ALM7</accession>
<gene>
    <name evidence="1" type="primary">leuC</name>
    <name type="ordered locus">CKO_03306</name>
</gene>
<proteinExistence type="inferred from homology"/>